<accession>W7WWA2</accession>
<organism evidence="4 5">
    <name type="scientific">Tetrahymena thermophila (strain SB210)</name>
    <dbReference type="NCBI Taxonomy" id="312017"/>
    <lineage>
        <taxon>Eukaryota</taxon>
        <taxon>Sar</taxon>
        <taxon>Alveolata</taxon>
        <taxon>Ciliophora</taxon>
        <taxon>Intramacronucleata</taxon>
        <taxon>Oligohymenophorea</taxon>
        <taxon>Hymenostomatida</taxon>
        <taxon>Tetrahymenina</taxon>
        <taxon>Tetrahymenidae</taxon>
        <taxon>Tetrahymena</taxon>
    </lineage>
</organism>
<proteinExistence type="evidence at protein level"/>
<evidence type="ECO:0000255" key="1"/>
<evidence type="ECO:0000269" key="2">
    <source>
    </source>
</evidence>
<evidence type="ECO:0000305" key="3">
    <source>
    </source>
</evidence>
<evidence type="ECO:0000312" key="4">
    <source>
        <dbReference type="EMBL" id="EWS71110.1"/>
    </source>
</evidence>
<evidence type="ECO:0000312" key="5">
    <source>
        <dbReference type="Proteomes" id="UP000009168"/>
    </source>
</evidence>
<comment type="function">
    <text evidence="2">Associates with components of the nexin-dynein regulatory complex (N-DRC), a key regulator of ciliary/flagellar motility, and might act as an inner dynein arm (IDA) hub or linkage.</text>
</comment>
<comment type="subunit">
    <text evidence="2">Forms a heterodimer with CFAP57A. Associates with components of the nexin-dynein regulatory complex (N-DRC) and the CFAP184:CFAP263 complex.</text>
</comment>
<comment type="subcellular location">
    <subcellularLocation>
        <location evidence="3">Cell projection</location>
        <location evidence="3">Cilium</location>
    </subcellularLocation>
</comment>
<comment type="similarity">
    <text>Belongs to the CFAP57 family.</text>
</comment>
<reference evidence="5" key="1">
    <citation type="journal article" date="2006" name="PLoS Biol.">
        <title>Macronuclear genome sequence of the ciliate Tetrahymena thermophila, a model eukaryote.</title>
        <authorList>
            <person name="Eisen J.A."/>
            <person name="Coyne R.S."/>
            <person name="Wu M."/>
            <person name="Wu D."/>
            <person name="Thiagarajan M."/>
            <person name="Wortman J.R."/>
            <person name="Badger J.H."/>
            <person name="Ren Q."/>
            <person name="Amedeo P."/>
            <person name="Jones K.M."/>
            <person name="Tallon L.J."/>
            <person name="Delcher A.L."/>
            <person name="Salzberg S.L."/>
            <person name="Silva J.C."/>
            <person name="Haas B.J."/>
            <person name="Majoros W.H."/>
            <person name="Farzad M."/>
            <person name="Carlton J.M."/>
            <person name="Smith R.K. Jr."/>
            <person name="Garg J."/>
            <person name="Pearlman R.E."/>
            <person name="Karrer K.M."/>
            <person name="Sun L."/>
            <person name="Manning G."/>
            <person name="Elde N.C."/>
            <person name="Turkewitz A.P."/>
            <person name="Asai D.J."/>
            <person name="Wilkes D.E."/>
            <person name="Wang Y."/>
            <person name="Cai H."/>
            <person name="Collins K."/>
            <person name="Stewart B.A."/>
            <person name="Lee S.R."/>
            <person name="Wilamowska K."/>
            <person name="Weinberg Z."/>
            <person name="Ruzzo W.L."/>
            <person name="Wloga D."/>
            <person name="Gaertig J."/>
            <person name="Frankel J."/>
            <person name="Tsao C.-C."/>
            <person name="Gorovsky M.A."/>
            <person name="Keeling P.J."/>
            <person name="Waller R.F."/>
            <person name="Patron N.J."/>
            <person name="Cherry J.M."/>
            <person name="Stover N.A."/>
            <person name="Krieger C.J."/>
            <person name="del Toro C."/>
            <person name="Ryder H.F."/>
            <person name="Williamson S.C."/>
            <person name="Barbeau R.A."/>
            <person name="Hamilton E.P."/>
            <person name="Orias E."/>
        </authorList>
    </citation>
    <scope>NUCLEOTIDE SEQUENCE [LARGE SCALE GENOMIC DNA]</scope>
    <source>
        <strain evidence="5">SB210</strain>
    </source>
</reference>
<reference key="2">
    <citation type="journal article" date="2023" name="Nat. Commun.">
        <title>Integrated modeling of the Nexin-dynein regulatory complex reveals its regulatory mechanism.</title>
        <authorList>
            <person name="Ghanaeian A."/>
            <person name="Majhi S."/>
            <person name="McCafferty C.L."/>
            <person name="Nami B."/>
            <person name="Black C.S."/>
            <person name="Yang S.K."/>
            <person name="Legal T."/>
            <person name="Papoulas O."/>
            <person name="Janowska M."/>
            <person name="Valente-Paterno M."/>
            <person name="Marcotte E.M."/>
            <person name="Wloga D."/>
            <person name="Bui K.H."/>
        </authorList>
    </citation>
    <scope>FUNCTION</scope>
    <scope>SUBUNIT</scope>
    <scope>SUBCELLULAR LOCATION</scope>
</reference>
<dbReference type="EMBL" id="GG662247">
    <property type="protein sequence ID" value="EWS71110.1"/>
    <property type="molecule type" value="Genomic_DNA"/>
</dbReference>
<dbReference type="RefSeq" id="XP_012656353.1">
    <property type="nucleotide sequence ID" value="XM_012800899.1"/>
</dbReference>
<dbReference type="PDB" id="8TID">
    <property type="method" value="EM"/>
    <property type="resolution" value="3.60 A"/>
    <property type="chains" value="W=1-1308"/>
</dbReference>
<dbReference type="PDBsum" id="8TID"/>
<dbReference type="EMDB" id="EMD-41284"/>
<dbReference type="SMR" id="W7WWA2"/>
<dbReference type="STRING" id="312017.W7WWA2"/>
<dbReference type="GeneID" id="24440178"/>
<dbReference type="KEGG" id="tet:TTHERM_000681920"/>
<dbReference type="InParanoid" id="W7WWA2"/>
<dbReference type="OrthoDB" id="47276at2759"/>
<dbReference type="Proteomes" id="UP000009168">
    <property type="component" value="Unassembled WGS sequence"/>
</dbReference>
<dbReference type="GO" id="GO:0005929">
    <property type="term" value="C:cilium"/>
    <property type="evidence" value="ECO:0007669"/>
    <property type="project" value="UniProtKB-SubCell"/>
</dbReference>
<dbReference type="Gene3D" id="2.130.10.10">
    <property type="entry name" value="YVTN repeat-like/Quinoprotein amine dehydrogenase"/>
    <property type="match status" value="3"/>
</dbReference>
<dbReference type="InterPro" id="IPR052993">
    <property type="entry name" value="CFA-57"/>
</dbReference>
<dbReference type="InterPro" id="IPR015943">
    <property type="entry name" value="WD40/YVTN_repeat-like_dom_sf"/>
</dbReference>
<dbReference type="InterPro" id="IPR036322">
    <property type="entry name" value="WD40_repeat_dom_sf"/>
</dbReference>
<dbReference type="InterPro" id="IPR001680">
    <property type="entry name" value="WD40_rpt"/>
</dbReference>
<dbReference type="PANTHER" id="PTHR32215">
    <property type="entry name" value="CILIA- AND FLAGELLA-ASSOCIATED PROTEIN 57"/>
    <property type="match status" value="1"/>
</dbReference>
<dbReference type="PANTHER" id="PTHR32215:SF0">
    <property type="entry name" value="CILIA- AND FLAGELLA-ASSOCIATED PROTEIN 57"/>
    <property type="match status" value="1"/>
</dbReference>
<dbReference type="Pfam" id="PF00400">
    <property type="entry name" value="WD40"/>
    <property type="match status" value="3"/>
</dbReference>
<dbReference type="SMART" id="SM00320">
    <property type="entry name" value="WD40"/>
    <property type="match status" value="5"/>
</dbReference>
<dbReference type="SUPFAM" id="SSF50978">
    <property type="entry name" value="WD40 repeat-like"/>
    <property type="match status" value="2"/>
</dbReference>
<dbReference type="PROSITE" id="PS50082">
    <property type="entry name" value="WD_REPEATS_2"/>
    <property type="match status" value="2"/>
</dbReference>
<dbReference type="PROSITE" id="PS50294">
    <property type="entry name" value="WD_REPEATS_REGION"/>
    <property type="match status" value="2"/>
</dbReference>
<keyword id="KW-0002">3D-structure</keyword>
<keyword id="KW-0966">Cell projection</keyword>
<keyword id="KW-0175">Coiled coil</keyword>
<keyword id="KW-1185">Reference proteome</keyword>
<keyword id="KW-0677">Repeat</keyword>
<keyword id="KW-0853">WD repeat</keyword>
<sequence length="1308" mass="151506">MAGLAQHIQLKYIFGMNNEIRNSLQFHDEDRIIYPAGYNVVLHDLNDKSQHYYQGTNEYRGISCLALSPLKRYLALGVKGQRDPAIIIFDTFTQKRRKNLGLNLGNLDRYNIKQWVSIAFPSQNQETKYIFSLSGAGGDVVLCWWWHEKGKCLGSIDLGAQNDIYEISFNHSDANSICVTGNNFFGIYAKIEGTYVREDNQQKQKPSVQNGENSSAAQLPQPTLNIQVSAGNNNQNPQPEIKLENGNLISNLPADIVEKNFVAHLWMQCESYLVVFVESGEIILCDSRGNFLQIMEQSPRYFIVSRSGMIKIVAAVAYSKGFYVACSESIVLQYHYTQDNDKNPFTCVNQFKLKQFVELKEIEIKSICMNKAEDKLLIGLDNNQIYEIKIKPYHPETVNNDSSEDREVTLINHLNHTGPINSMDICKRKPIIATCSTDKTIKIWDYEKKQIKISWAFNEEAFCLSLHPQGFCVAVGFLDKLRLMNLCIHNSQNTTKNKAYKEISPFKGCKEIKFSNGGQYFAAVNSTSSNHVIQVFKFFTGENPSQLVFKGHTGRVKCIAWSSDDSFLLSCGLDGMILAWKLDQDFQHQQTIVPRIVDIHNKGVNFSGLTLTVDNKTIVAVGNDRHIHQAVINEQQPVDKTDKKLLDINLSCLAFPSSNKLLFAGIQDDARSSGAIRCFIYPLTHGKFTDYQAHDERGVEKMKITNDDRYIITAGKDGCIMVFEIKDKDARGMKLKDGYAKYSEEELITRSDLDDLKSTRDGLIVQINEFSNQNAMIGLNSRDDRIRQLETQIENNSQKRKQMFEQLLKSKTMEEQKLIQEINEIKEQFEQEIQVMDTKYQKEVMSLVEEYENQKRLHEIENNKNNKKKTKLLQEHSQKLQIIDDQYQKLLEEQITQKERVEKQINHLQKEQQEVLMQISEEKETEIKNLNQKNSKDEQAITDQGLKAKSDISITKKKIMQQQQEAQDLKEQKQEYERQKEKLKIQNQELRDKIDGQKKIILERDRTIGEKEKIIYNLKKKAQDLEKFKFVLDHKIKELKRDIVPREDEITKMKQETNNMDQYLKELNAYNNYLGTVVDELYTTQETMKEDIKQQRQQISVQQVKISRFKDDVYSLAQHILDYDKLVDETERLFMKHVNDKEVKRQSVEGDIMMEYRSQKKNLEKLVNMFKKSLQKDNQIHKDDKIRIMKDNVDLIREINTLRKSIKDITKGQQSNIPDQKGQTQHMPLQTPQLSRKSISQPVLPPISKSAMFEGVTQQNEIQKSHTQINPELVEEKQKVLNSLQTDILELQKVYEALNYEKHNLTQA</sequence>
<name>CF57C_TETTS</name>
<feature type="chain" id="PRO_0000460220" description="Cilia- and flagella-associated protein 57 C">
    <location>
        <begin position="1"/>
        <end position="1308"/>
    </location>
</feature>
<feature type="repeat" description="WD 1" evidence="1">
    <location>
        <begin position="57"/>
        <end position="99"/>
    </location>
</feature>
<feature type="repeat" description="WD 2" evidence="1">
    <location>
        <begin position="110"/>
        <end position="154"/>
    </location>
</feature>
<feature type="repeat" description="WD 3" evidence="1">
    <location>
        <begin position="415"/>
        <end position="454"/>
    </location>
</feature>
<feature type="repeat" description="WD 4" evidence="1">
    <location>
        <begin position="504"/>
        <end position="546"/>
    </location>
</feature>
<feature type="repeat" description="WD 5" evidence="1">
    <location>
        <begin position="551"/>
        <end position="590"/>
    </location>
</feature>
<feature type="repeat" description="WD 6" evidence="1">
    <location>
        <begin position="645"/>
        <end position="689"/>
    </location>
</feature>
<feature type="repeat" description="WD 7" evidence="1">
    <location>
        <begin position="694"/>
        <end position="733"/>
    </location>
</feature>
<feature type="coiled-coil region" evidence="1">
    <location>
        <begin position="779"/>
        <end position="1000"/>
    </location>
</feature>
<gene>
    <name type="primary">CFAP57C</name>
    <name type="synonym">WDR65C</name>
    <name evidence="4" type="ORF">TTHERM_000681920</name>
</gene>
<protein>
    <recommendedName>
        <fullName>Cilia- and flagella-associated protein 57 C</fullName>
    </recommendedName>
    <alternativeName>
        <fullName>WD repeat-containing protein 65 C</fullName>
    </alternativeName>
</protein>